<organism>
    <name type="scientific">Psilotum nudum</name>
    <name type="common">Whisk fern</name>
    <name type="synonym">Lycopodium nudum</name>
    <dbReference type="NCBI Taxonomy" id="3240"/>
    <lineage>
        <taxon>Eukaryota</taxon>
        <taxon>Viridiplantae</taxon>
        <taxon>Streptophyta</taxon>
        <taxon>Embryophyta</taxon>
        <taxon>Tracheophyta</taxon>
        <taxon>Polypodiopsida</taxon>
        <taxon>Ophioglossidae</taxon>
        <taxon>Psilotales</taxon>
        <taxon>Psilotaceae</taxon>
        <taxon>Psilotum</taxon>
    </lineage>
</organism>
<accession>Q04237</accession>
<keyword id="KW-0067">ATP-binding</keyword>
<keyword id="KW-0375">Hydrogen ion transport</keyword>
<keyword id="KW-0406">Ion transport</keyword>
<keyword id="KW-0547">Nucleotide-binding</keyword>
<keyword id="KW-1278">Translocase</keyword>
<keyword id="KW-0813">Transport</keyword>
<dbReference type="EC" id="7.1.2.2"/>
<dbReference type="EMBL" id="X56985">
    <property type="protein sequence ID" value="CAA40303.1"/>
    <property type="molecule type" value="Genomic_DNA"/>
</dbReference>
<dbReference type="PIR" id="S21816">
    <property type="entry name" value="S21816"/>
</dbReference>
<dbReference type="GO" id="GO:0005524">
    <property type="term" value="F:ATP binding"/>
    <property type="evidence" value="ECO:0007669"/>
    <property type="project" value="UniProtKB-KW"/>
</dbReference>
<dbReference type="GO" id="GO:1902600">
    <property type="term" value="P:proton transmembrane transport"/>
    <property type="evidence" value="ECO:0007669"/>
    <property type="project" value="UniProtKB-KW"/>
</dbReference>
<evidence type="ECO:0000255" key="1">
    <source>
        <dbReference type="PROSITE-ProRule" id="PRU10106"/>
    </source>
</evidence>
<evidence type="ECO:0000305" key="2"/>
<comment type="function">
    <text>Catalytic subunit of the peripheral V1 complex of vacuolar ATPase. V-ATPase vacuolar ATPase is responsible for acidifying a variety of intracellular compartments in eukaryotic cells.</text>
</comment>
<comment type="catalytic activity">
    <reaction evidence="1">
        <text>ATP + H2O + 4 H(+)(in) = ADP + phosphate + 5 H(+)(out)</text>
        <dbReference type="Rhea" id="RHEA:57720"/>
        <dbReference type="ChEBI" id="CHEBI:15377"/>
        <dbReference type="ChEBI" id="CHEBI:15378"/>
        <dbReference type="ChEBI" id="CHEBI:30616"/>
        <dbReference type="ChEBI" id="CHEBI:43474"/>
        <dbReference type="ChEBI" id="CHEBI:456216"/>
        <dbReference type="EC" id="7.1.2.2"/>
    </reaction>
</comment>
<comment type="subunit">
    <text>V-ATPase is a heteromultimeric enzyme composed of a peripheral catalytic V1 complex (main components: subunits A, B, C, D, E, and F) attached to an integral membrane V0 proton pore complex (main component: the proteolipid protein).</text>
</comment>
<comment type="miscellaneous">
    <text>Two separate genes encode the catalytic 70 kDa V-ATPase subunit in psilotum and equisetum.</text>
</comment>
<comment type="similarity">
    <text evidence="2">Belongs to the ATPase alpha/beta chains family.</text>
</comment>
<proteinExistence type="inferred from homology"/>
<feature type="chain" id="PRO_0000144586" description="V-type proton ATPase catalytic subunit A isoform 1">
    <location>
        <begin position="1" status="less than"/>
        <end position="30" status="greater than"/>
    </location>
</feature>
<feature type="non-terminal residue">
    <location>
        <position position="1"/>
    </location>
</feature>
<feature type="non-terminal residue">
    <location>
        <position position="30"/>
    </location>
</feature>
<reference key="1">
    <citation type="journal article" date="1993" name="FEBS Lett.">
        <title>A conserved intron in the V-ATPase A subunit genes of plants and algae.</title>
        <authorList>
            <person name="Starke T."/>
            <person name="Gogarten J.P."/>
        </authorList>
    </citation>
    <scope>NUCLEOTIDE SEQUENCE [GENOMIC DNA]</scope>
</reference>
<sequence length="30" mass="3380">AEVLMDFPQLTMTLPDGREESVMKRTTLVA</sequence>
<protein>
    <recommendedName>
        <fullName>V-type proton ATPase catalytic subunit A isoform 1</fullName>
        <shortName>V-ATPase subunit A 1</shortName>
    </recommendedName>
    <alternativeName>
        <fullName>Vacuolar proton pump subunit alpha 1</fullName>
        <ecNumber>7.1.2.2</ecNumber>
    </alternativeName>
</protein>
<name>VATA1_PSINU</name>